<protein>
    <recommendedName>
        <fullName evidence="1">ATP phosphoribosyltransferase</fullName>
        <shortName evidence="1">ATP-PRT</shortName>
        <shortName evidence="1">ATP-PRTase</shortName>
        <ecNumber evidence="1">2.4.2.17</ecNumber>
    </recommendedName>
</protein>
<sequence>MLRVAVPNKGTLSEPAAEILSEAGYRRRTDTKDLTVVDPANNVEFFFLRPKDIAIYVGSGQLDLGITGRDLAAESDAPVRERLALGFGSSTFRYAAPAGRDWAPEDLAGRRIATAFPNLVRKDLAGRGIEATVIRLDGAVEISVALGVADAIADVVGSGRTLGLHNLVAFGDSLCDSEAVLIERDGAGDENAAARDQLAARVQGVVFGQQYLMLDYDCPRHVLDRATEVTPGLESPTIAPLADQDWVAVRALVPRRDVNSIMDELAAIGAKAILASDIRFCRF</sequence>
<reference key="1">
    <citation type="submission" date="2006-06" db="EMBL/GenBank/DDBJ databases">
        <title>Complete sequence of chromosome of Mycobacterium sp. MCS.</title>
        <authorList>
            <consortium name="US DOE Joint Genome Institute"/>
            <person name="Copeland A."/>
            <person name="Lucas S."/>
            <person name="Lapidus A."/>
            <person name="Barry K."/>
            <person name="Detter J.C."/>
            <person name="Glavina del Rio T."/>
            <person name="Hammon N."/>
            <person name="Israni S."/>
            <person name="Dalin E."/>
            <person name="Tice H."/>
            <person name="Pitluck S."/>
            <person name="Martinez M."/>
            <person name="Schmutz J."/>
            <person name="Larimer F."/>
            <person name="Land M."/>
            <person name="Hauser L."/>
            <person name="Kyrpides N."/>
            <person name="Kim E."/>
            <person name="Miller C.D."/>
            <person name="Hughes J.E."/>
            <person name="Anderson A.J."/>
            <person name="Sims R.C."/>
            <person name="Richardson P."/>
        </authorList>
    </citation>
    <scope>NUCLEOTIDE SEQUENCE [LARGE SCALE GENOMIC DNA]</scope>
    <source>
        <strain>MCS</strain>
    </source>
</reference>
<dbReference type="EC" id="2.4.2.17" evidence="1"/>
<dbReference type="EMBL" id="CP000384">
    <property type="protein sequence ID" value="ABG09252.1"/>
    <property type="molecule type" value="Genomic_DNA"/>
</dbReference>
<dbReference type="SMR" id="Q1B782"/>
<dbReference type="KEGG" id="mmc:Mmcs_3145"/>
<dbReference type="HOGENOM" id="CLU_038115_1_1_11"/>
<dbReference type="BioCyc" id="MSP164756:G1G6O-3210-MONOMER"/>
<dbReference type="UniPathway" id="UPA00031">
    <property type="reaction ID" value="UER00006"/>
</dbReference>
<dbReference type="GO" id="GO:0005737">
    <property type="term" value="C:cytoplasm"/>
    <property type="evidence" value="ECO:0007669"/>
    <property type="project" value="UniProtKB-SubCell"/>
</dbReference>
<dbReference type="GO" id="GO:0005524">
    <property type="term" value="F:ATP binding"/>
    <property type="evidence" value="ECO:0007669"/>
    <property type="project" value="UniProtKB-KW"/>
</dbReference>
<dbReference type="GO" id="GO:0003879">
    <property type="term" value="F:ATP phosphoribosyltransferase activity"/>
    <property type="evidence" value="ECO:0007669"/>
    <property type="project" value="UniProtKB-UniRule"/>
</dbReference>
<dbReference type="GO" id="GO:0000287">
    <property type="term" value="F:magnesium ion binding"/>
    <property type="evidence" value="ECO:0007669"/>
    <property type="project" value="UniProtKB-UniRule"/>
</dbReference>
<dbReference type="GO" id="GO:0000105">
    <property type="term" value="P:L-histidine biosynthetic process"/>
    <property type="evidence" value="ECO:0007669"/>
    <property type="project" value="UniProtKB-UniRule"/>
</dbReference>
<dbReference type="CDD" id="cd13591">
    <property type="entry name" value="PBP2_HisGL1"/>
    <property type="match status" value="1"/>
</dbReference>
<dbReference type="FunFam" id="3.30.70.120:FF:000003">
    <property type="entry name" value="ATP phosphoribosyltransferase"/>
    <property type="match status" value="1"/>
</dbReference>
<dbReference type="FunFam" id="3.40.190.10:FF:000136">
    <property type="entry name" value="ATP phosphoribosyltransferase"/>
    <property type="match status" value="1"/>
</dbReference>
<dbReference type="Gene3D" id="3.30.70.120">
    <property type="match status" value="1"/>
</dbReference>
<dbReference type="Gene3D" id="3.40.190.10">
    <property type="entry name" value="Periplasmic binding protein-like II"/>
    <property type="match status" value="2"/>
</dbReference>
<dbReference type="HAMAP" id="MF_00079">
    <property type="entry name" value="HisG_Long"/>
    <property type="match status" value="1"/>
</dbReference>
<dbReference type="InterPro" id="IPR020621">
    <property type="entry name" value="ATP-PRT_HisG_long"/>
</dbReference>
<dbReference type="InterPro" id="IPR013820">
    <property type="entry name" value="ATP_PRibTrfase_cat"/>
</dbReference>
<dbReference type="InterPro" id="IPR018198">
    <property type="entry name" value="ATP_PRibTrfase_CS"/>
</dbReference>
<dbReference type="InterPro" id="IPR001348">
    <property type="entry name" value="ATP_PRibTrfase_HisG"/>
</dbReference>
<dbReference type="InterPro" id="IPR013115">
    <property type="entry name" value="HisG_C"/>
</dbReference>
<dbReference type="InterPro" id="IPR011322">
    <property type="entry name" value="N-reg_PII-like_a/b"/>
</dbReference>
<dbReference type="InterPro" id="IPR015867">
    <property type="entry name" value="N-reg_PII/ATP_PRibTrfase_C"/>
</dbReference>
<dbReference type="NCBIfam" id="TIGR00070">
    <property type="entry name" value="hisG"/>
    <property type="match status" value="1"/>
</dbReference>
<dbReference type="NCBIfam" id="TIGR03455">
    <property type="entry name" value="HisG_C-term"/>
    <property type="match status" value="1"/>
</dbReference>
<dbReference type="PANTHER" id="PTHR21403:SF8">
    <property type="entry name" value="ATP PHOSPHORIBOSYLTRANSFERASE"/>
    <property type="match status" value="1"/>
</dbReference>
<dbReference type="PANTHER" id="PTHR21403">
    <property type="entry name" value="ATP PHOSPHORIBOSYLTRANSFERASE ATP-PRTASE"/>
    <property type="match status" value="1"/>
</dbReference>
<dbReference type="Pfam" id="PF01634">
    <property type="entry name" value="HisG"/>
    <property type="match status" value="1"/>
</dbReference>
<dbReference type="Pfam" id="PF08029">
    <property type="entry name" value="HisG_C"/>
    <property type="match status" value="1"/>
</dbReference>
<dbReference type="SUPFAM" id="SSF54913">
    <property type="entry name" value="GlnB-like"/>
    <property type="match status" value="1"/>
</dbReference>
<dbReference type="SUPFAM" id="SSF53850">
    <property type="entry name" value="Periplasmic binding protein-like II"/>
    <property type="match status" value="1"/>
</dbReference>
<dbReference type="PROSITE" id="PS01316">
    <property type="entry name" value="ATP_P_PHORIBOSYLTR"/>
    <property type="match status" value="1"/>
</dbReference>
<organism>
    <name type="scientific">Mycobacterium sp. (strain MCS)</name>
    <dbReference type="NCBI Taxonomy" id="164756"/>
    <lineage>
        <taxon>Bacteria</taxon>
        <taxon>Bacillati</taxon>
        <taxon>Actinomycetota</taxon>
        <taxon>Actinomycetes</taxon>
        <taxon>Mycobacteriales</taxon>
        <taxon>Mycobacteriaceae</taxon>
        <taxon>Mycobacterium</taxon>
    </lineage>
</organism>
<comment type="function">
    <text evidence="1">Catalyzes the condensation of ATP and 5-phosphoribose 1-diphosphate to form N'-(5'-phosphoribosyl)-ATP (PR-ATP). Has a crucial role in the pathway because the rate of histidine biosynthesis seems to be controlled primarily by regulation of HisG enzymatic activity.</text>
</comment>
<comment type="catalytic activity">
    <reaction evidence="1">
        <text>1-(5-phospho-beta-D-ribosyl)-ATP + diphosphate = 5-phospho-alpha-D-ribose 1-diphosphate + ATP</text>
        <dbReference type="Rhea" id="RHEA:18473"/>
        <dbReference type="ChEBI" id="CHEBI:30616"/>
        <dbReference type="ChEBI" id="CHEBI:33019"/>
        <dbReference type="ChEBI" id="CHEBI:58017"/>
        <dbReference type="ChEBI" id="CHEBI:73183"/>
        <dbReference type="EC" id="2.4.2.17"/>
    </reaction>
</comment>
<comment type="cofactor">
    <cofactor evidence="1">
        <name>Mg(2+)</name>
        <dbReference type="ChEBI" id="CHEBI:18420"/>
    </cofactor>
</comment>
<comment type="activity regulation">
    <text evidence="1">Feedback inhibited by histidine.</text>
</comment>
<comment type="pathway">
    <text evidence="1">Amino-acid biosynthesis; L-histidine biosynthesis; L-histidine from 5-phospho-alpha-D-ribose 1-diphosphate: step 1/9.</text>
</comment>
<comment type="subunit">
    <text evidence="1">Equilibrium between an active dimeric form, an inactive hexameric form and higher aggregates. Interconversion between the various forms is largely reversible and is influenced by the natural substrates and inhibitors of the enzyme.</text>
</comment>
<comment type="subcellular location">
    <subcellularLocation>
        <location evidence="1">Cytoplasm</location>
    </subcellularLocation>
</comment>
<comment type="similarity">
    <text evidence="1">Belongs to the ATP phosphoribosyltransferase family. Long subfamily.</text>
</comment>
<keyword id="KW-0028">Amino-acid biosynthesis</keyword>
<keyword id="KW-0067">ATP-binding</keyword>
<keyword id="KW-0963">Cytoplasm</keyword>
<keyword id="KW-0328">Glycosyltransferase</keyword>
<keyword id="KW-0368">Histidine biosynthesis</keyword>
<keyword id="KW-0460">Magnesium</keyword>
<keyword id="KW-0479">Metal-binding</keyword>
<keyword id="KW-0547">Nucleotide-binding</keyword>
<keyword id="KW-0808">Transferase</keyword>
<gene>
    <name evidence="1" type="primary">hisG</name>
    <name type="ordered locus">Mmcs_3145</name>
</gene>
<name>HIS1_MYCSS</name>
<accession>Q1B782</accession>
<proteinExistence type="inferred from homology"/>
<feature type="chain" id="PRO_1000004478" description="ATP phosphoribosyltransferase">
    <location>
        <begin position="1"/>
        <end position="283"/>
    </location>
</feature>
<evidence type="ECO:0000255" key="1">
    <source>
        <dbReference type="HAMAP-Rule" id="MF_00079"/>
    </source>
</evidence>